<dbReference type="EMBL" id="AAFI02000023">
    <property type="protein sequence ID" value="EAL68173.1"/>
    <property type="molecule type" value="Genomic_DNA"/>
</dbReference>
<dbReference type="RefSeq" id="XP_642064.1">
    <property type="nucleotide sequence ID" value="XM_636972.1"/>
</dbReference>
<dbReference type="SMR" id="Q54YY8"/>
<dbReference type="GlyGen" id="Q54YY8">
    <property type="glycosylation" value="1 site"/>
</dbReference>
<dbReference type="PaxDb" id="44689-DDB0204361"/>
<dbReference type="EnsemblProtists" id="EAL68173">
    <property type="protein sequence ID" value="EAL68173"/>
    <property type="gene ID" value="DDB_G0278001"/>
</dbReference>
<dbReference type="GeneID" id="8621276"/>
<dbReference type="KEGG" id="ddi:DDB_G0278001"/>
<dbReference type="dictyBase" id="DDB_G0278001"/>
<dbReference type="VEuPathDB" id="AmoebaDB:DDB_G0278001"/>
<dbReference type="HOGENOM" id="CLU_1974670_0_0_1"/>
<dbReference type="InParanoid" id="Q54YY8"/>
<dbReference type="PhylomeDB" id="Q54YY8"/>
<dbReference type="PRO" id="PR:Q54YY8"/>
<dbReference type="Proteomes" id="UP000002195">
    <property type="component" value="Chromosome 3"/>
</dbReference>
<dbReference type="GO" id="GO:0005576">
    <property type="term" value="C:extracellular region"/>
    <property type="evidence" value="ECO:0007669"/>
    <property type="project" value="UniProtKB-SubCell"/>
</dbReference>
<keyword id="KW-0325">Glycoprotein</keyword>
<keyword id="KW-1185">Reference proteome</keyword>
<keyword id="KW-0964">Secreted</keyword>
<keyword id="KW-0732">Signal</keyword>
<gene>
    <name type="ORF">DDB_G0278001</name>
</gene>
<reference key="1">
    <citation type="journal article" date="2005" name="Nature">
        <title>The genome of the social amoeba Dictyostelium discoideum.</title>
        <authorList>
            <person name="Eichinger L."/>
            <person name="Pachebat J.A."/>
            <person name="Gloeckner G."/>
            <person name="Rajandream M.A."/>
            <person name="Sucgang R."/>
            <person name="Berriman M."/>
            <person name="Song J."/>
            <person name="Olsen R."/>
            <person name="Szafranski K."/>
            <person name="Xu Q."/>
            <person name="Tunggal B."/>
            <person name="Kummerfeld S."/>
            <person name="Madera M."/>
            <person name="Konfortov B.A."/>
            <person name="Rivero F."/>
            <person name="Bankier A.T."/>
            <person name="Lehmann R."/>
            <person name="Hamlin N."/>
            <person name="Davies R."/>
            <person name="Gaudet P."/>
            <person name="Fey P."/>
            <person name="Pilcher K."/>
            <person name="Chen G."/>
            <person name="Saunders D."/>
            <person name="Sodergren E.J."/>
            <person name="Davis P."/>
            <person name="Kerhornou A."/>
            <person name="Nie X."/>
            <person name="Hall N."/>
            <person name="Anjard C."/>
            <person name="Hemphill L."/>
            <person name="Bason N."/>
            <person name="Farbrother P."/>
            <person name="Desany B."/>
            <person name="Just E."/>
            <person name="Morio T."/>
            <person name="Rost R."/>
            <person name="Churcher C.M."/>
            <person name="Cooper J."/>
            <person name="Haydock S."/>
            <person name="van Driessche N."/>
            <person name="Cronin A."/>
            <person name="Goodhead I."/>
            <person name="Muzny D.M."/>
            <person name="Mourier T."/>
            <person name="Pain A."/>
            <person name="Lu M."/>
            <person name="Harper D."/>
            <person name="Lindsay R."/>
            <person name="Hauser H."/>
            <person name="James K.D."/>
            <person name="Quiles M."/>
            <person name="Madan Babu M."/>
            <person name="Saito T."/>
            <person name="Buchrieser C."/>
            <person name="Wardroper A."/>
            <person name="Felder M."/>
            <person name="Thangavelu M."/>
            <person name="Johnson D."/>
            <person name="Knights A."/>
            <person name="Loulseged H."/>
            <person name="Mungall K.L."/>
            <person name="Oliver K."/>
            <person name="Price C."/>
            <person name="Quail M.A."/>
            <person name="Urushihara H."/>
            <person name="Hernandez J."/>
            <person name="Rabbinowitsch E."/>
            <person name="Steffen D."/>
            <person name="Sanders M."/>
            <person name="Ma J."/>
            <person name="Kohara Y."/>
            <person name="Sharp S."/>
            <person name="Simmonds M.N."/>
            <person name="Spiegler S."/>
            <person name="Tivey A."/>
            <person name="Sugano S."/>
            <person name="White B."/>
            <person name="Walker D."/>
            <person name="Woodward J.R."/>
            <person name="Winckler T."/>
            <person name="Tanaka Y."/>
            <person name="Shaulsky G."/>
            <person name="Schleicher M."/>
            <person name="Weinstock G.M."/>
            <person name="Rosenthal A."/>
            <person name="Cox E.C."/>
            <person name="Chisholm R.L."/>
            <person name="Gibbs R.A."/>
            <person name="Loomis W.F."/>
            <person name="Platzer M."/>
            <person name="Kay R.R."/>
            <person name="Williams J.G."/>
            <person name="Dear P.H."/>
            <person name="Noegel A.A."/>
            <person name="Barrell B.G."/>
            <person name="Kuspa A."/>
        </authorList>
    </citation>
    <scope>NUCLEOTIDE SEQUENCE [LARGE SCALE GENOMIC DNA]</scope>
    <source>
        <strain>AX4</strain>
    </source>
</reference>
<evidence type="ECO:0000255" key="1"/>
<evidence type="ECO:0000305" key="2"/>
<accession>Q54YY8</accession>
<proteinExistence type="inferred from homology"/>
<sequence length="130" mass="15462">MINNFKGILIIILSFLFLLLFKYSNADDYFPYPFFNDQSNQVILFTEINFQGEKFIYNTSMGYLELPNKFHNNVGSFISGTINVCFIKWDPFEQHQIYSRRVNKDYFSNNRFGSRIDGIYNGLCRDSIWK</sequence>
<feature type="signal peptide" evidence="1">
    <location>
        <begin position="1"/>
        <end position="26"/>
    </location>
</feature>
<feature type="chain" id="PRO_0000312736" description="Uncharacterized gerABC family protein DDB_G0278001">
    <location>
        <begin position="27"/>
        <end position="130"/>
    </location>
</feature>
<feature type="glycosylation site" description="N-linked (GlcNAc...) asparagine" evidence="1">
    <location>
        <position position="58"/>
    </location>
</feature>
<organism>
    <name type="scientific">Dictyostelium discoideum</name>
    <name type="common">Social amoeba</name>
    <dbReference type="NCBI Taxonomy" id="44689"/>
    <lineage>
        <taxon>Eukaryota</taxon>
        <taxon>Amoebozoa</taxon>
        <taxon>Evosea</taxon>
        <taxon>Eumycetozoa</taxon>
        <taxon>Dictyostelia</taxon>
        <taxon>Dictyosteliales</taxon>
        <taxon>Dictyosteliaceae</taxon>
        <taxon>Dictyostelium</taxon>
    </lineage>
</organism>
<protein>
    <recommendedName>
        <fullName>Uncharacterized gerABC family protein DDB_G0278001</fullName>
    </recommendedName>
</protein>
<comment type="subcellular location">
    <subcellularLocation>
        <location evidence="2">Secreted</location>
    </subcellularLocation>
</comment>
<comment type="similarity">
    <text evidence="2">Belongs to the Dictyostelium gerABC family.</text>
</comment>
<name>GERL1_DICDI</name>